<proteinExistence type="inferred from homology"/>
<feature type="signal peptide" evidence="2">
    <location>
        <begin position="1"/>
        <end position="23"/>
    </location>
</feature>
<feature type="chain" id="PRO_0000032355" description="Semenogelin-1">
    <location>
        <begin position="24"/>
        <end position="615"/>
    </location>
</feature>
<feature type="region of interest" description="Disordered" evidence="3">
    <location>
        <begin position="24"/>
        <end position="118"/>
    </location>
</feature>
<feature type="region of interest" description="Disordered" evidence="3">
    <location>
        <begin position="133"/>
        <end position="160"/>
    </location>
</feature>
<feature type="region of interest" description="Disordered" evidence="3">
    <location>
        <begin position="172"/>
        <end position="585"/>
    </location>
</feature>
<feature type="compositionally biased region" description="Polar residues" evidence="3">
    <location>
        <begin position="34"/>
        <end position="46"/>
    </location>
</feature>
<feature type="compositionally biased region" description="Basic and acidic residues" evidence="3">
    <location>
        <begin position="50"/>
        <end position="80"/>
    </location>
</feature>
<feature type="compositionally biased region" description="Polar residues" evidence="3">
    <location>
        <begin position="81"/>
        <end position="91"/>
    </location>
</feature>
<feature type="compositionally biased region" description="Basic and acidic residues" evidence="3">
    <location>
        <begin position="107"/>
        <end position="118"/>
    </location>
</feature>
<feature type="compositionally biased region" description="Polar residues" evidence="3">
    <location>
        <begin position="138"/>
        <end position="160"/>
    </location>
</feature>
<feature type="compositionally biased region" description="Polar residues" evidence="3">
    <location>
        <begin position="177"/>
        <end position="196"/>
    </location>
</feature>
<feature type="compositionally biased region" description="Polar residues" evidence="3">
    <location>
        <begin position="209"/>
        <end position="224"/>
    </location>
</feature>
<feature type="compositionally biased region" description="Basic and acidic residues" evidence="3">
    <location>
        <begin position="241"/>
        <end position="253"/>
    </location>
</feature>
<feature type="compositionally biased region" description="Polar residues" evidence="3">
    <location>
        <begin position="254"/>
        <end position="265"/>
    </location>
</feature>
<feature type="compositionally biased region" description="Basic and acidic residues" evidence="3">
    <location>
        <begin position="283"/>
        <end position="300"/>
    </location>
</feature>
<feature type="compositionally biased region" description="Basic and acidic residues" evidence="3">
    <location>
        <begin position="308"/>
        <end position="317"/>
    </location>
</feature>
<feature type="compositionally biased region" description="Basic and acidic residues" evidence="3">
    <location>
        <begin position="341"/>
        <end position="358"/>
    </location>
</feature>
<feature type="compositionally biased region" description="Basic and acidic residues" evidence="3">
    <location>
        <begin position="366"/>
        <end position="375"/>
    </location>
</feature>
<feature type="compositionally biased region" description="Basic and acidic residues" evidence="3">
    <location>
        <begin position="399"/>
        <end position="416"/>
    </location>
</feature>
<feature type="compositionally biased region" description="Basic and acidic residues" evidence="3">
    <location>
        <begin position="424"/>
        <end position="433"/>
    </location>
</feature>
<feature type="compositionally biased region" description="Basic and acidic residues" evidence="3">
    <location>
        <begin position="457"/>
        <end position="474"/>
    </location>
</feature>
<feature type="compositionally biased region" description="Basic and acidic residues" evidence="3">
    <location>
        <begin position="481"/>
        <end position="491"/>
    </location>
</feature>
<feature type="compositionally biased region" description="Basic and acidic residues" evidence="3">
    <location>
        <begin position="515"/>
        <end position="532"/>
    </location>
</feature>
<feature type="compositionally biased region" description="Basic and acidic residues" evidence="3">
    <location>
        <begin position="539"/>
        <end position="549"/>
    </location>
</feature>
<feature type="compositionally biased region" description="Polar residues" evidence="3">
    <location>
        <begin position="550"/>
        <end position="563"/>
    </location>
</feature>
<feature type="modified residue" description="Pyrrolidone carboxylic acid" evidence="2">
    <location>
        <position position="24"/>
    </location>
</feature>
<feature type="glycosylation site" description="N-linked (GlcNAc...) asparagine" evidence="2">
    <location>
        <position position="148"/>
    </location>
</feature>
<feature type="glycosylation site" description="N-linked (GlcNAc...) asparagine" evidence="2">
    <location>
        <position position="184"/>
    </location>
</feature>
<feature type="glycosylation site" description="N-linked (GlcNAc...) asparagine" evidence="2">
    <location>
        <position position="223"/>
    </location>
</feature>
<feature type="glycosylation site" description="N-linked (GlcNAc...) asparagine" evidence="2">
    <location>
        <position position="258"/>
    </location>
</feature>
<feature type="glycosylation site" description="N-linked (GlcNAc...) asparagine" evidence="2">
    <location>
        <position position="275"/>
    </location>
</feature>
<feature type="glycosylation site" description="N-linked (GlcNAc...) asparagine" evidence="2">
    <location>
        <position position="306"/>
    </location>
</feature>
<feature type="glycosylation site" description="N-linked (GlcNAc...) asparagine" evidence="2">
    <location>
        <position position="332"/>
    </location>
</feature>
<feature type="glycosylation site" description="N-linked (GlcNAc...) asparagine" evidence="2">
    <location>
        <position position="364"/>
    </location>
</feature>
<feature type="glycosylation site" description="N-linked (GlcNAc...) asparagine" evidence="2">
    <location>
        <position position="390"/>
    </location>
</feature>
<feature type="glycosylation site" description="N-linked (GlcNAc...) asparagine" evidence="2">
    <location>
        <position position="422"/>
    </location>
</feature>
<feature type="glycosylation site" description="N-linked (GlcNAc...) asparagine" evidence="2">
    <location>
        <position position="448"/>
    </location>
</feature>
<feature type="glycosylation site" description="N-linked (GlcNAc...) asparagine" evidence="2">
    <location>
        <position position="480"/>
    </location>
</feature>
<feature type="glycosylation site" description="N-linked (GlcNAc...) asparagine" evidence="2">
    <location>
        <position position="506"/>
    </location>
</feature>
<feature type="glycosylation site" description="N-linked (GlcNAc...) asparagine" evidence="2">
    <location>
        <position position="538"/>
    </location>
</feature>
<feature type="disulfide bond" description="Interchain" evidence="1">
    <location>
        <position position="238"/>
    </location>
</feature>
<keyword id="KW-1015">Disulfide bond</keyword>
<keyword id="KW-0325">Glycoprotein</keyword>
<keyword id="KW-0873">Pyrrolidone carboxylic acid</keyword>
<keyword id="KW-0677">Repeat</keyword>
<keyword id="KW-0964">Secreted</keyword>
<keyword id="KW-0732">Signal</keyword>
<protein>
    <recommendedName>
        <fullName>Semenogelin-1</fullName>
    </recommendedName>
    <alternativeName>
        <fullName>Semenogelin I</fullName>
        <shortName>SGI</shortName>
    </alternativeName>
</protein>
<accession>O77733</accession>
<reference key="1">
    <citation type="journal article" date="1998" name="Eur. J. Biochem.">
        <title>The cotton-top tamarin carries an extended semenogelin I gene but no semenogelin II gene.</title>
        <authorList>
            <person name="Lundwall A."/>
        </authorList>
    </citation>
    <scope>NUCLEOTIDE SEQUENCE [GENOMIC DNA]</scope>
    <source>
        <tissue>Liver</tissue>
    </source>
</reference>
<evidence type="ECO:0000250" key="1"/>
<evidence type="ECO:0000255" key="2"/>
<evidence type="ECO:0000256" key="3">
    <source>
        <dbReference type="SAM" id="MobiDB-lite"/>
    </source>
</evidence>
<evidence type="ECO:0000305" key="4"/>
<gene>
    <name type="primary">SEMG1</name>
</gene>
<sequence length="615" mass="68118">MKPIIFLVLSLLLILEKQAAVMGQKGGSKGRLPSESSQFPHGQKGQQYCARKDKQHAESKRSVSIEHTYHVDIPDHDQTRTSKQYDLNAQNKRIKSEKHAAGSQEPFNHKQEGREHGKSKGDFHVLIIHHKRGHAPHGTQNPSQDQGNSTSGKGISSQDSNTKERLLALGLGKEQDSVSGTQRNGTQGGSQSSPVLQTEDPVHNKKPETQNSLQNKGSSPNVNETKQKHSSKVQSPLCSAQEDRLQHGSKDVFSKNQNQTRNPNQDQEHGQKAHNRSCQCSSTEERRPNHGEKGIQKDASKGSTSNQTEDKMHDKSQKQVTTPSQEDGHRANKTSSQSSGTEERRPNHGEKGIQKDASKGSTSNQTEDKMHDKSQKQVTTPSQEDGHRANKTSSQSSGTEERRPNHGEKGIQKDASKGSTSNQTEDKMHDKSQKQVTTPSQEDGHRANKTSSQSSGTEERRPNHGEKGIQKDASKGSTSNKTEDKMHDKSQKQVTTPSQEDGHRANKTSSQSSGTEERRPNHGEKGIQKDASKGSSSNKTEDEKHDKSQKQVTTPSQDQQSGQDADEEEDLLSHYQKDRHQHRSYGGLDIVIVEHEADDDDRLTHHDNNQNSIFT</sequence>
<dbReference type="EMBL" id="AJ002153">
    <property type="protein sequence ID" value="CAA05213.1"/>
    <property type="molecule type" value="Genomic_DNA"/>
</dbReference>
<dbReference type="SMR" id="O77733"/>
<dbReference type="GlyCosmos" id="O77733">
    <property type="glycosylation" value="14 sites, No reported glycans"/>
</dbReference>
<dbReference type="GO" id="GO:0070062">
    <property type="term" value="C:extracellular exosome"/>
    <property type="evidence" value="ECO:0007669"/>
    <property type="project" value="TreeGrafter"/>
</dbReference>
<dbReference type="GO" id="GO:0050817">
    <property type="term" value="P:coagulation"/>
    <property type="evidence" value="ECO:0007669"/>
    <property type="project" value="InterPro"/>
</dbReference>
<dbReference type="GO" id="GO:1901318">
    <property type="term" value="P:negative regulation of flagellated sperm motility"/>
    <property type="evidence" value="ECO:0007669"/>
    <property type="project" value="InterPro"/>
</dbReference>
<dbReference type="GO" id="GO:0048240">
    <property type="term" value="P:sperm capacitation"/>
    <property type="evidence" value="ECO:0007669"/>
    <property type="project" value="TreeGrafter"/>
</dbReference>
<dbReference type="InterPro" id="IPR008836">
    <property type="entry name" value="Semenogelin"/>
</dbReference>
<dbReference type="PANTHER" id="PTHR10547:SF8">
    <property type="match status" value="1"/>
</dbReference>
<dbReference type="PANTHER" id="PTHR10547">
    <property type="entry name" value="SEMENOGELIN/SEMINAL VESICLE SECRETORY PROTEIN"/>
    <property type="match status" value="1"/>
</dbReference>
<dbReference type="Pfam" id="PF05474">
    <property type="entry name" value="Semenogelin"/>
    <property type="match status" value="3"/>
</dbReference>
<organism>
    <name type="scientific">Saguinus oedipus</name>
    <name type="common">Cotton-top tamarin</name>
    <dbReference type="NCBI Taxonomy" id="9490"/>
    <lineage>
        <taxon>Eukaryota</taxon>
        <taxon>Metazoa</taxon>
        <taxon>Chordata</taxon>
        <taxon>Craniata</taxon>
        <taxon>Vertebrata</taxon>
        <taxon>Euteleostomi</taxon>
        <taxon>Mammalia</taxon>
        <taxon>Eutheria</taxon>
        <taxon>Euarchontoglires</taxon>
        <taxon>Primates</taxon>
        <taxon>Haplorrhini</taxon>
        <taxon>Platyrrhini</taxon>
        <taxon>Cebidae</taxon>
        <taxon>Callitrichinae</taxon>
        <taxon>Saguinus</taxon>
    </lineage>
</organism>
<name>SEMG1_SAGOE</name>
<comment type="function">
    <text evidence="1">Predominant protein in semen. It participates in the formation of a gel matrix entrapping the accessory gland secretions and ejaculated spermatozoa. Fragments of semenogelin and/or fragments of the related proteins may contribute to the activation of progressive sperm movements as the gel-forming proteins are fragmented by KLK3/PSA (By similarity).</text>
</comment>
<comment type="subunit">
    <text evidence="1">Occurs in disulfide-linked complexes.</text>
</comment>
<comment type="subcellular location">
    <subcellularLocation>
        <location evidence="1">Secreted</location>
    </subcellularLocation>
</comment>
<comment type="PTM">
    <text evidence="1">Transglutaminase substrate.</text>
</comment>
<comment type="PTM">
    <text evidence="1">Rapidly cleaved after ejaculation by KLK3/PSA, resulting in liquefaction of the semen coagulum and the progressive release of motile spermatozoa.</text>
</comment>
<comment type="similarity">
    <text evidence="4">Belongs to the semenogelin family.</text>
</comment>